<name>RIR2_IIV3</name>
<gene>
    <name type="ORF">IIV3-048L</name>
</gene>
<accession>Q197B2</accession>
<comment type="function">
    <text evidence="1">Ribonucleoside-diphosphate reductase holoenzyme provides the precursors necessary for viral DNA synthesis. Allows virus growth in non-dividing cells. Catalyzes the biosynthesis of deoxyribonucleotides from the corresponding ribonucleotides (By similarity).</text>
</comment>
<comment type="catalytic activity">
    <reaction>
        <text>a 2'-deoxyribonucleoside 5'-diphosphate + [thioredoxin]-disulfide + H2O = a ribonucleoside 5'-diphosphate + [thioredoxin]-dithiol</text>
        <dbReference type="Rhea" id="RHEA:23252"/>
        <dbReference type="Rhea" id="RHEA-COMP:10698"/>
        <dbReference type="Rhea" id="RHEA-COMP:10700"/>
        <dbReference type="ChEBI" id="CHEBI:15377"/>
        <dbReference type="ChEBI" id="CHEBI:29950"/>
        <dbReference type="ChEBI" id="CHEBI:50058"/>
        <dbReference type="ChEBI" id="CHEBI:57930"/>
        <dbReference type="ChEBI" id="CHEBI:73316"/>
        <dbReference type="EC" id="1.17.4.1"/>
    </reaction>
</comment>
<comment type="cofactor">
    <cofactor evidence="1">
        <name>Fe cation</name>
        <dbReference type="ChEBI" id="CHEBI:24875"/>
    </cofactor>
    <text evidence="1">Binds 2 iron ions per subunit.</text>
</comment>
<comment type="subunit">
    <text evidence="1">Heterotetramer composed of a homodimer of the large subunit (R1) and a homodimer of the small subunit (R2). Larger multisubunit protein complex are also active, composed of (R1)n(R2)n (By similarity).</text>
</comment>
<comment type="similarity">
    <text evidence="2">Belongs to the ribonucleoside diphosphate reductase small chain family.</text>
</comment>
<evidence type="ECO:0000250" key="1"/>
<evidence type="ECO:0000305" key="2"/>
<sequence length="376" mass="44070">MEYEHLWLTAYGCLAVVGAVVVYCAIKQSLVTNWWFYGSIYPQVKLMADRTTFKPFEYPGCYDKWDTHEHAHWSFKELNMQDDVHDWHNRLSEAEKTFLVQILRFFTQGDVDVAVGYVQYLQLFQQPEVRMMLFSFGAREAMHIASYSHLISTLNLPDVTYQEFLKYKAMKDKHEFVFNSRFKSTTVGRFFNYLLFGYDTHLEEIAVKIALFSAFIEGVQLFSSFIMLLNFTRHGLMKKMGQIIQWSIADETHHTNSMMELFSTLVVENKSHIRLGVLEARVRDTARKIVQLEDGFIDLAFSMGEMRQLTADDVKSYIRYITNRRLQTMGYLPLYSVVENPLPWVEDLLNAPSHTNFFENKPTEYAKASLTGDWPW</sequence>
<proteinExistence type="inferred from homology"/>
<feature type="chain" id="PRO_0000376909" description="Probable ribonucleoside-diphosphate reductase small subunit 048L">
    <location>
        <begin position="1"/>
        <end position="376"/>
    </location>
</feature>
<feature type="active site" evidence="1">
    <location>
        <position position="147"/>
    </location>
</feature>
<feature type="binding site" evidence="1">
    <location>
        <position position="110"/>
    </location>
    <ligand>
        <name>Fe cation</name>
        <dbReference type="ChEBI" id="CHEBI:24875"/>
        <label>1</label>
    </ligand>
</feature>
<feature type="binding site" evidence="1">
    <location>
        <position position="140"/>
    </location>
    <ligand>
        <name>Fe cation</name>
        <dbReference type="ChEBI" id="CHEBI:24875"/>
        <label>1</label>
    </ligand>
</feature>
<feature type="binding site" evidence="1">
    <location>
        <position position="140"/>
    </location>
    <ligand>
        <name>Fe cation</name>
        <dbReference type="ChEBI" id="CHEBI:24875"/>
        <label>2</label>
    </ligand>
</feature>
<feature type="binding site" evidence="1">
    <location>
        <position position="143"/>
    </location>
    <ligand>
        <name>Fe cation</name>
        <dbReference type="ChEBI" id="CHEBI:24875"/>
        <label>1</label>
    </ligand>
</feature>
<feature type="binding site" evidence="1">
    <location>
        <position position="217"/>
    </location>
    <ligand>
        <name>Fe cation</name>
        <dbReference type="ChEBI" id="CHEBI:24875"/>
        <label>2</label>
    </ligand>
</feature>
<feature type="binding site" evidence="1">
    <location>
        <position position="251"/>
    </location>
    <ligand>
        <name>Fe cation</name>
        <dbReference type="ChEBI" id="CHEBI:24875"/>
        <label>2</label>
    </ligand>
</feature>
<feature type="binding site" evidence="1">
    <location>
        <position position="254"/>
    </location>
    <ligand>
        <name>Fe cation</name>
        <dbReference type="ChEBI" id="CHEBI:24875"/>
        <label>2</label>
    </ligand>
</feature>
<protein>
    <recommendedName>
        <fullName>Probable ribonucleoside-diphosphate reductase small subunit 048L</fullName>
        <ecNumber>1.17.4.1</ecNumber>
    </recommendedName>
    <alternativeName>
        <fullName>Ribonucleotide reductase small subunit</fullName>
    </alternativeName>
</protein>
<dbReference type="EC" id="1.17.4.1"/>
<dbReference type="EMBL" id="DQ643392">
    <property type="protein sequence ID" value="ABF82078.1"/>
    <property type="molecule type" value="Genomic_DNA"/>
</dbReference>
<dbReference type="RefSeq" id="YP_654620.1">
    <property type="nucleotide sequence ID" value="NC_008187.1"/>
</dbReference>
<dbReference type="SMR" id="Q197B2"/>
<dbReference type="KEGG" id="vg:4156298"/>
<dbReference type="OrthoDB" id="4477at10239"/>
<dbReference type="Proteomes" id="UP000001358">
    <property type="component" value="Genome"/>
</dbReference>
<dbReference type="GO" id="GO:0046872">
    <property type="term" value="F:metal ion binding"/>
    <property type="evidence" value="ECO:0007669"/>
    <property type="project" value="UniProtKB-KW"/>
</dbReference>
<dbReference type="GO" id="GO:0004748">
    <property type="term" value="F:ribonucleoside-diphosphate reductase activity, thioredoxin disulfide as acceptor"/>
    <property type="evidence" value="ECO:0007669"/>
    <property type="project" value="UniProtKB-EC"/>
</dbReference>
<dbReference type="GO" id="GO:0009263">
    <property type="term" value="P:deoxyribonucleotide biosynthetic process"/>
    <property type="evidence" value="ECO:0007669"/>
    <property type="project" value="UniProtKB-KW"/>
</dbReference>
<dbReference type="CDD" id="cd01049">
    <property type="entry name" value="RNRR2"/>
    <property type="match status" value="1"/>
</dbReference>
<dbReference type="Gene3D" id="1.10.620.20">
    <property type="entry name" value="Ribonucleotide Reductase, subunit A"/>
    <property type="match status" value="1"/>
</dbReference>
<dbReference type="InterPro" id="IPR009078">
    <property type="entry name" value="Ferritin-like_SF"/>
</dbReference>
<dbReference type="InterPro" id="IPR012348">
    <property type="entry name" value="RNR-like"/>
</dbReference>
<dbReference type="InterPro" id="IPR033909">
    <property type="entry name" value="RNR_small"/>
</dbReference>
<dbReference type="InterPro" id="IPR000358">
    <property type="entry name" value="RNR_small_fam"/>
</dbReference>
<dbReference type="NCBIfam" id="NF007186">
    <property type="entry name" value="PRK09614.1-5"/>
    <property type="match status" value="1"/>
</dbReference>
<dbReference type="PANTHER" id="PTHR23409">
    <property type="entry name" value="RIBONUCLEOSIDE-DIPHOSPHATE REDUCTASE SMALL CHAIN"/>
    <property type="match status" value="1"/>
</dbReference>
<dbReference type="PANTHER" id="PTHR23409:SF18">
    <property type="entry name" value="RIBONUCLEOSIDE-DIPHOSPHATE REDUCTASE SUBUNIT M2"/>
    <property type="match status" value="1"/>
</dbReference>
<dbReference type="Pfam" id="PF00268">
    <property type="entry name" value="Ribonuc_red_sm"/>
    <property type="match status" value="1"/>
</dbReference>
<dbReference type="PIRSF" id="PIRSF000355">
    <property type="entry name" value="NrdB"/>
    <property type="match status" value="1"/>
</dbReference>
<dbReference type="SUPFAM" id="SSF47240">
    <property type="entry name" value="Ferritin-like"/>
    <property type="match status" value="1"/>
</dbReference>
<organism>
    <name type="scientific">Invertebrate iridescent virus 3</name>
    <name type="common">IIV-3</name>
    <name type="synonym">Mosquito iridescent virus</name>
    <dbReference type="NCBI Taxonomy" id="345201"/>
    <lineage>
        <taxon>Viruses</taxon>
        <taxon>Varidnaviria</taxon>
        <taxon>Bamfordvirae</taxon>
        <taxon>Nucleocytoviricota</taxon>
        <taxon>Megaviricetes</taxon>
        <taxon>Pimascovirales</taxon>
        <taxon>Iridoviridae</taxon>
        <taxon>Betairidovirinae</taxon>
        <taxon>Chloriridovirus</taxon>
    </lineage>
</organism>
<organismHost>
    <name type="scientific">Aedes vexans</name>
    <name type="common">Inland floodwater mosquito</name>
    <name type="synonym">Culex vexans</name>
    <dbReference type="NCBI Taxonomy" id="7163"/>
</organismHost>
<organismHost>
    <name type="scientific">Culex territans</name>
    <dbReference type="NCBI Taxonomy" id="42431"/>
</organismHost>
<organismHost>
    <name type="scientific">Culiseta annulata</name>
    <dbReference type="NCBI Taxonomy" id="332058"/>
</organismHost>
<organismHost>
    <name type="scientific">Ochlerotatus sollicitans</name>
    <name type="common">eastern saltmarsh mosquito</name>
    <dbReference type="NCBI Taxonomy" id="310513"/>
</organismHost>
<organismHost>
    <name type="scientific">Ochlerotatus taeniorhynchus</name>
    <name type="common">Black salt marsh mosquito</name>
    <name type="synonym">Aedes taeniorhynchus</name>
    <dbReference type="NCBI Taxonomy" id="329105"/>
</organismHost>
<organismHost>
    <name type="scientific">Psorophora ferox</name>
    <dbReference type="NCBI Taxonomy" id="7183"/>
</organismHost>
<keyword id="KW-0215">Deoxyribonucleotide synthesis</keyword>
<keyword id="KW-0408">Iron</keyword>
<keyword id="KW-0479">Metal-binding</keyword>
<keyword id="KW-0560">Oxidoreductase</keyword>
<keyword id="KW-1185">Reference proteome</keyword>
<reference key="1">
    <citation type="journal article" date="2006" name="J. Virol.">
        <title>Genome of invertebrate iridescent virus type 3 (mosquito iridescent virus).</title>
        <authorList>
            <person name="Delhon G."/>
            <person name="Tulman E.R."/>
            <person name="Afonso C.L."/>
            <person name="Lu Z."/>
            <person name="Becnel J.J."/>
            <person name="Moser B.A."/>
            <person name="Kutish G.F."/>
            <person name="Rock D.L."/>
        </authorList>
    </citation>
    <scope>NUCLEOTIDE SEQUENCE [LARGE SCALE GENOMIC DNA]</scope>
</reference>